<name>RS13_STRP6</name>
<protein>
    <recommendedName>
        <fullName evidence="1">Small ribosomal subunit protein uS13</fullName>
    </recommendedName>
    <alternativeName>
        <fullName evidence="3">30S ribosomal protein S13</fullName>
    </alternativeName>
</protein>
<gene>
    <name evidence="1" type="primary">rpsM</name>
    <name type="ordered locus">M6_Spy0117</name>
</gene>
<reference key="1">
    <citation type="journal article" date="2004" name="J. Infect. Dis.">
        <title>Progress toward characterization of the group A Streptococcus metagenome: complete genome sequence of a macrolide-resistant serotype M6 strain.</title>
        <authorList>
            <person name="Banks D.J."/>
            <person name="Porcella S.F."/>
            <person name="Barbian K.D."/>
            <person name="Beres S.B."/>
            <person name="Philips L.E."/>
            <person name="Voyich J.M."/>
            <person name="DeLeo F.R."/>
            <person name="Martin J.M."/>
            <person name="Somerville G.A."/>
            <person name="Musser J.M."/>
        </authorList>
    </citation>
    <scope>NUCLEOTIDE SEQUENCE [LARGE SCALE GENOMIC DNA]</scope>
    <source>
        <strain>ATCC BAA-946 / MGAS10394</strain>
    </source>
</reference>
<feature type="chain" id="PRO_0000132153" description="Small ribosomal subunit protein uS13">
    <location>
        <begin position="1"/>
        <end position="121"/>
    </location>
</feature>
<feature type="region of interest" description="Disordered" evidence="2">
    <location>
        <begin position="96"/>
        <end position="121"/>
    </location>
</feature>
<feature type="compositionally biased region" description="Basic residues" evidence="2">
    <location>
        <begin position="106"/>
        <end position="121"/>
    </location>
</feature>
<dbReference type="EMBL" id="CP000003">
    <property type="protein sequence ID" value="AAT86252.1"/>
    <property type="molecule type" value="Genomic_DNA"/>
</dbReference>
<dbReference type="RefSeq" id="WP_002986615.1">
    <property type="nucleotide sequence ID" value="NC_006086.1"/>
</dbReference>
<dbReference type="SMR" id="Q5XEB1"/>
<dbReference type="GeneID" id="69900050"/>
<dbReference type="KEGG" id="spa:M6_Spy0117"/>
<dbReference type="HOGENOM" id="CLU_103849_1_1_9"/>
<dbReference type="Proteomes" id="UP000001167">
    <property type="component" value="Chromosome"/>
</dbReference>
<dbReference type="GO" id="GO:0005829">
    <property type="term" value="C:cytosol"/>
    <property type="evidence" value="ECO:0007669"/>
    <property type="project" value="TreeGrafter"/>
</dbReference>
<dbReference type="GO" id="GO:0015935">
    <property type="term" value="C:small ribosomal subunit"/>
    <property type="evidence" value="ECO:0007669"/>
    <property type="project" value="TreeGrafter"/>
</dbReference>
<dbReference type="GO" id="GO:0019843">
    <property type="term" value="F:rRNA binding"/>
    <property type="evidence" value="ECO:0007669"/>
    <property type="project" value="UniProtKB-UniRule"/>
</dbReference>
<dbReference type="GO" id="GO:0003735">
    <property type="term" value="F:structural constituent of ribosome"/>
    <property type="evidence" value="ECO:0007669"/>
    <property type="project" value="InterPro"/>
</dbReference>
<dbReference type="GO" id="GO:0000049">
    <property type="term" value="F:tRNA binding"/>
    <property type="evidence" value="ECO:0007669"/>
    <property type="project" value="UniProtKB-UniRule"/>
</dbReference>
<dbReference type="GO" id="GO:0006412">
    <property type="term" value="P:translation"/>
    <property type="evidence" value="ECO:0007669"/>
    <property type="project" value="UniProtKB-UniRule"/>
</dbReference>
<dbReference type="FunFam" id="1.10.8.50:FF:000001">
    <property type="entry name" value="30S ribosomal protein S13"/>
    <property type="match status" value="1"/>
</dbReference>
<dbReference type="FunFam" id="4.10.910.10:FF:000001">
    <property type="entry name" value="30S ribosomal protein S13"/>
    <property type="match status" value="1"/>
</dbReference>
<dbReference type="Gene3D" id="1.10.8.50">
    <property type="match status" value="1"/>
</dbReference>
<dbReference type="Gene3D" id="4.10.910.10">
    <property type="entry name" value="30s ribosomal protein s13, domain 2"/>
    <property type="match status" value="1"/>
</dbReference>
<dbReference type="HAMAP" id="MF_01315">
    <property type="entry name" value="Ribosomal_uS13"/>
    <property type="match status" value="1"/>
</dbReference>
<dbReference type="InterPro" id="IPR027437">
    <property type="entry name" value="Rbsml_uS13_C"/>
</dbReference>
<dbReference type="InterPro" id="IPR001892">
    <property type="entry name" value="Ribosomal_uS13"/>
</dbReference>
<dbReference type="InterPro" id="IPR010979">
    <property type="entry name" value="Ribosomal_uS13-like_H2TH"/>
</dbReference>
<dbReference type="InterPro" id="IPR019980">
    <property type="entry name" value="Ribosomal_uS13_bac-type"/>
</dbReference>
<dbReference type="InterPro" id="IPR018269">
    <property type="entry name" value="Ribosomal_uS13_CS"/>
</dbReference>
<dbReference type="NCBIfam" id="TIGR03631">
    <property type="entry name" value="uS13_bact"/>
    <property type="match status" value="1"/>
</dbReference>
<dbReference type="PANTHER" id="PTHR10871">
    <property type="entry name" value="30S RIBOSOMAL PROTEIN S13/40S RIBOSOMAL PROTEIN S18"/>
    <property type="match status" value="1"/>
</dbReference>
<dbReference type="PANTHER" id="PTHR10871:SF1">
    <property type="entry name" value="SMALL RIBOSOMAL SUBUNIT PROTEIN US13M"/>
    <property type="match status" value="1"/>
</dbReference>
<dbReference type="Pfam" id="PF00416">
    <property type="entry name" value="Ribosomal_S13"/>
    <property type="match status" value="1"/>
</dbReference>
<dbReference type="PIRSF" id="PIRSF002134">
    <property type="entry name" value="Ribosomal_S13"/>
    <property type="match status" value="1"/>
</dbReference>
<dbReference type="SUPFAM" id="SSF46946">
    <property type="entry name" value="S13-like H2TH domain"/>
    <property type="match status" value="1"/>
</dbReference>
<dbReference type="PROSITE" id="PS00646">
    <property type="entry name" value="RIBOSOMAL_S13_1"/>
    <property type="match status" value="1"/>
</dbReference>
<dbReference type="PROSITE" id="PS50159">
    <property type="entry name" value="RIBOSOMAL_S13_2"/>
    <property type="match status" value="1"/>
</dbReference>
<evidence type="ECO:0000255" key="1">
    <source>
        <dbReference type="HAMAP-Rule" id="MF_01315"/>
    </source>
</evidence>
<evidence type="ECO:0000256" key="2">
    <source>
        <dbReference type="SAM" id="MobiDB-lite"/>
    </source>
</evidence>
<evidence type="ECO:0000305" key="3"/>
<sequence>MARIAGVDIPNDKRVVISLTYVYGIGLATSKKILAAAGISEDIRVKDLTSDQEDAIRREVDAIKVEGDLRREVNMNIKRLMEIGSYRGIRHRRGLPVRGQNTKNNARTRKGKAVAIAGKKK</sequence>
<organism>
    <name type="scientific">Streptococcus pyogenes serotype M6 (strain ATCC BAA-946 / MGAS10394)</name>
    <dbReference type="NCBI Taxonomy" id="286636"/>
    <lineage>
        <taxon>Bacteria</taxon>
        <taxon>Bacillati</taxon>
        <taxon>Bacillota</taxon>
        <taxon>Bacilli</taxon>
        <taxon>Lactobacillales</taxon>
        <taxon>Streptococcaceae</taxon>
        <taxon>Streptococcus</taxon>
    </lineage>
</organism>
<comment type="function">
    <text evidence="1">Located at the top of the head of the 30S subunit, it contacts several helices of the 16S rRNA. In the 70S ribosome it contacts the 23S rRNA (bridge B1a) and protein L5 of the 50S subunit (bridge B1b), connecting the 2 subunits; these bridges are implicated in subunit movement. Contacts the tRNAs in the A and P-sites.</text>
</comment>
<comment type="subunit">
    <text evidence="1">Part of the 30S ribosomal subunit. Forms a loose heterodimer with protein S19. Forms two bridges to the 50S subunit in the 70S ribosome.</text>
</comment>
<comment type="similarity">
    <text evidence="1">Belongs to the universal ribosomal protein uS13 family.</text>
</comment>
<accession>Q5XEB1</accession>
<keyword id="KW-0687">Ribonucleoprotein</keyword>
<keyword id="KW-0689">Ribosomal protein</keyword>
<keyword id="KW-0694">RNA-binding</keyword>
<keyword id="KW-0699">rRNA-binding</keyword>
<keyword id="KW-0820">tRNA-binding</keyword>
<proteinExistence type="inferred from homology"/>